<keyword id="KW-0037">Angiogenesis</keyword>
<keyword id="KW-0175">Coiled coil</keyword>
<keyword id="KW-0217">Developmental protein</keyword>
<keyword id="KW-0221">Differentiation</keyword>
<keyword id="KW-1015">Disulfide bond</keyword>
<keyword id="KW-0325">Glycoprotein</keyword>
<keyword id="KW-1185">Reference proteome</keyword>
<keyword id="KW-0964">Secreted</keyword>
<keyword id="KW-0732">Signal</keyword>
<organism>
    <name type="scientific">Rattus norvegicus</name>
    <name type="common">Rat</name>
    <dbReference type="NCBI Taxonomy" id="10116"/>
    <lineage>
        <taxon>Eukaryota</taxon>
        <taxon>Metazoa</taxon>
        <taxon>Chordata</taxon>
        <taxon>Craniata</taxon>
        <taxon>Vertebrata</taxon>
        <taxon>Euteleostomi</taxon>
        <taxon>Mammalia</taxon>
        <taxon>Eutheria</taxon>
        <taxon>Euarchontoglires</taxon>
        <taxon>Glires</taxon>
        <taxon>Rodentia</taxon>
        <taxon>Myomorpha</taxon>
        <taxon>Muroidea</taxon>
        <taxon>Muridae</taxon>
        <taxon>Murinae</taxon>
        <taxon>Rattus</taxon>
    </lineage>
</organism>
<gene>
    <name type="primary">Angpt1</name>
</gene>
<comment type="function">
    <text>Binds and activates TIE2 receptor by inducing its tyrosine phosphorylation. Implicated in endothelial developmental processes later and distinct from that of VEGF. Appears to play a crucial role in mediating reciprocal interactions between the endothelium and surrounding matrix and mesenchyme. Mediates blood vessel maturation/stability. It may play an important role in the heart early development.</text>
</comment>
<comment type="subunit">
    <text evidence="1 2">Homooligomer (By similarity). Interacts with TEK/TIE2 (By similarity). Interacts with SVEP1/polydom (By similarity). Interacts with THBD; this interaction significantly inhibits the generation of activated PC and TAFIa/CPB2 by the thrombin/thrombomodulin complex (By similarity).</text>
</comment>
<comment type="subcellular location">
    <subcellularLocation>
        <location evidence="1">Secreted</location>
    </subcellularLocation>
</comment>
<sequence>MTVFLSFAFFAAILTHIGCSNQRRSPENGGRRYNRIQHGQCAYTFILPEHDGNCRESATEQYNTNALQRDAPHVETDFSSQKLQHLEHVMENYTQWLQKLENYIVENMKSEMAQIQQNAVQNHTATMLEIGTSLLSQTAEQTRKLTDVETQVLNQTSRLEIQLLENSLSTYELEKQLLQQTNEILKIQEKNSLLEHKILEMEGKHKEELDTLKEEKENLQGLVTRQTFIIQELEKQLSRATSNNSVLQKQQLELMDTVHNLVSLCTKEVLLKGGKREEEKPFRDCADVYQAGFNKSGIYTIYFNNMPEPKKVFCNMDVNEGGWTVIQHREDGSLDFQRGWKEYKMGFGNPSGEYWLGNEFIFAITSQRQYMLRIELMDWEGNRAYSQYDRFHIGNQKQNYRLYLKGHTGTAGKQSSLILHGADFSTKDADNDNCMCKCALMLTGGWWFDACGPSNLNGMFYTAGQNHGKLNGIKWHYFKGPSYSLRSTTMMIRPLDF</sequence>
<accession>O35460</accession>
<accession>Q8K4Q4</accession>
<dbReference type="EMBL" id="AB080023">
    <property type="protein sequence ID" value="BAC10290.1"/>
    <property type="molecule type" value="mRNA"/>
</dbReference>
<dbReference type="EMBL" id="AF030376">
    <property type="protein sequence ID" value="AAC78246.1"/>
    <property type="molecule type" value="mRNA"/>
</dbReference>
<dbReference type="RefSeq" id="NP_445998.1">
    <property type="nucleotide sequence ID" value="NM_053546.1"/>
</dbReference>
<dbReference type="SMR" id="O35460"/>
<dbReference type="FunCoup" id="O35460">
    <property type="interactions" value="1536"/>
</dbReference>
<dbReference type="STRING" id="10116.ENSRNOP00000007979"/>
<dbReference type="GlyCosmos" id="O35460">
    <property type="glycosylation" value="5 sites, No reported glycans"/>
</dbReference>
<dbReference type="GlyGen" id="O35460">
    <property type="glycosylation" value="5 sites"/>
</dbReference>
<dbReference type="iPTMnet" id="O35460"/>
<dbReference type="PhosphoSitePlus" id="O35460"/>
<dbReference type="PaxDb" id="10116-ENSRNOP00000007979"/>
<dbReference type="GeneID" id="89807"/>
<dbReference type="KEGG" id="rno:89807"/>
<dbReference type="UCSC" id="RGD:628896">
    <property type="organism name" value="rat"/>
</dbReference>
<dbReference type="AGR" id="RGD:628896"/>
<dbReference type="CTD" id="284"/>
<dbReference type="RGD" id="628896">
    <property type="gene designation" value="Angpt1"/>
</dbReference>
<dbReference type="eggNOG" id="KOG2579">
    <property type="taxonomic scope" value="Eukaryota"/>
</dbReference>
<dbReference type="InParanoid" id="O35460"/>
<dbReference type="OrthoDB" id="7735366at2759"/>
<dbReference type="PhylomeDB" id="O35460"/>
<dbReference type="Reactome" id="R-RNO-210993">
    <property type="pathway name" value="Tie2 Signaling"/>
</dbReference>
<dbReference type="Reactome" id="R-RNO-5673001">
    <property type="pathway name" value="RAF/MAP kinase cascade"/>
</dbReference>
<dbReference type="PRO" id="PR:O35460"/>
<dbReference type="Proteomes" id="UP000002494">
    <property type="component" value="Unplaced"/>
</dbReference>
<dbReference type="GO" id="GO:0062023">
    <property type="term" value="C:collagen-containing extracellular matrix"/>
    <property type="evidence" value="ECO:0000318"/>
    <property type="project" value="GO_Central"/>
</dbReference>
<dbReference type="GO" id="GO:0005615">
    <property type="term" value="C:extracellular space"/>
    <property type="evidence" value="ECO:0000314"/>
    <property type="project" value="RGD"/>
</dbReference>
<dbReference type="GO" id="GO:0045121">
    <property type="term" value="C:membrane raft"/>
    <property type="evidence" value="ECO:0000266"/>
    <property type="project" value="RGD"/>
</dbReference>
<dbReference type="GO" id="GO:0005902">
    <property type="term" value="C:microvillus"/>
    <property type="evidence" value="ECO:0000266"/>
    <property type="project" value="RGD"/>
</dbReference>
<dbReference type="GO" id="GO:0005886">
    <property type="term" value="C:plasma membrane"/>
    <property type="evidence" value="ECO:0000266"/>
    <property type="project" value="RGD"/>
</dbReference>
<dbReference type="GO" id="GO:0042802">
    <property type="term" value="F:identical protein binding"/>
    <property type="evidence" value="ECO:0000353"/>
    <property type="project" value="RGD"/>
</dbReference>
<dbReference type="GO" id="GO:0048018">
    <property type="term" value="F:receptor ligand activity"/>
    <property type="evidence" value="ECO:0000266"/>
    <property type="project" value="RGD"/>
</dbReference>
<dbReference type="GO" id="GO:0030971">
    <property type="term" value="F:receptor tyrosine kinase binding"/>
    <property type="evidence" value="ECO:0000266"/>
    <property type="project" value="RGD"/>
</dbReference>
<dbReference type="GO" id="GO:0005102">
    <property type="term" value="F:signaling receptor binding"/>
    <property type="evidence" value="ECO:0000266"/>
    <property type="project" value="RGD"/>
</dbReference>
<dbReference type="GO" id="GO:0001525">
    <property type="term" value="P:angiogenesis"/>
    <property type="evidence" value="ECO:0000266"/>
    <property type="project" value="RGD"/>
</dbReference>
<dbReference type="GO" id="GO:0031100">
    <property type="term" value="P:animal organ regeneration"/>
    <property type="evidence" value="ECO:0000270"/>
    <property type="project" value="RGD"/>
</dbReference>
<dbReference type="GO" id="GO:0007596">
    <property type="term" value="P:blood coagulation"/>
    <property type="evidence" value="ECO:0007669"/>
    <property type="project" value="InterPro"/>
</dbReference>
<dbReference type="GO" id="GO:0007169">
    <property type="term" value="P:cell surface receptor protein tyrosine kinase signaling pathway"/>
    <property type="evidence" value="ECO:0000266"/>
    <property type="project" value="RGD"/>
</dbReference>
<dbReference type="GO" id="GO:0031589">
    <property type="term" value="P:cell-substrate adhesion"/>
    <property type="evidence" value="ECO:0000266"/>
    <property type="project" value="RGD"/>
</dbReference>
<dbReference type="GO" id="GO:0072012">
    <property type="term" value="P:glomerulus vasculature development"/>
    <property type="evidence" value="ECO:0000315"/>
    <property type="project" value="UniProtKB"/>
</dbReference>
<dbReference type="GO" id="GO:0030097">
    <property type="term" value="P:hemopoiesis"/>
    <property type="evidence" value="ECO:0000266"/>
    <property type="project" value="RGD"/>
</dbReference>
<dbReference type="GO" id="GO:0030210">
    <property type="term" value="P:heparin proteoglycan biosynthetic process"/>
    <property type="evidence" value="ECO:0000266"/>
    <property type="project" value="RGD"/>
</dbReference>
<dbReference type="GO" id="GO:0001701">
    <property type="term" value="P:in utero embryonic development"/>
    <property type="evidence" value="ECO:0000266"/>
    <property type="project" value="RGD"/>
</dbReference>
<dbReference type="GO" id="GO:0097421">
    <property type="term" value="P:liver regeneration"/>
    <property type="evidence" value="ECO:0000270"/>
    <property type="project" value="RGD"/>
</dbReference>
<dbReference type="GO" id="GO:0043066">
    <property type="term" value="P:negative regulation of apoptotic process"/>
    <property type="evidence" value="ECO:0000315"/>
    <property type="project" value="RGD"/>
</dbReference>
<dbReference type="GO" id="GO:0007162">
    <property type="term" value="P:negative regulation of cell adhesion"/>
    <property type="evidence" value="ECO:0000266"/>
    <property type="project" value="RGD"/>
</dbReference>
<dbReference type="GO" id="GO:0002719">
    <property type="term" value="P:negative regulation of cytokine production involved in immune response"/>
    <property type="evidence" value="ECO:0000266"/>
    <property type="project" value="RGD"/>
</dbReference>
<dbReference type="GO" id="GO:2000352">
    <property type="term" value="P:negative regulation of endothelial cell apoptotic process"/>
    <property type="evidence" value="ECO:0000266"/>
    <property type="project" value="RGD"/>
</dbReference>
<dbReference type="GO" id="GO:0043524">
    <property type="term" value="P:negative regulation of neuron apoptotic process"/>
    <property type="evidence" value="ECO:0000266"/>
    <property type="project" value="RGD"/>
</dbReference>
<dbReference type="GO" id="GO:0042308">
    <property type="term" value="P:negative regulation of protein import into nucleus"/>
    <property type="evidence" value="ECO:0000266"/>
    <property type="project" value="RGD"/>
</dbReference>
<dbReference type="GO" id="GO:1900747">
    <property type="term" value="P:negative regulation of vascular endothelial growth factor signaling pathway"/>
    <property type="evidence" value="ECO:0000266"/>
    <property type="project" value="RGD"/>
</dbReference>
<dbReference type="GO" id="GO:0043116">
    <property type="term" value="P:negative regulation of vascular permeability"/>
    <property type="evidence" value="ECO:0000266"/>
    <property type="project" value="RGD"/>
</dbReference>
<dbReference type="GO" id="GO:0051402">
    <property type="term" value="P:neuron apoptotic process"/>
    <property type="evidence" value="ECO:0000266"/>
    <property type="project" value="RGD"/>
</dbReference>
<dbReference type="GO" id="GO:0001541">
    <property type="term" value="P:ovarian follicle development"/>
    <property type="evidence" value="ECO:0000315"/>
    <property type="project" value="RGD"/>
</dbReference>
<dbReference type="GO" id="GO:0050918">
    <property type="term" value="P:positive chemotaxis"/>
    <property type="evidence" value="ECO:0000266"/>
    <property type="project" value="RGD"/>
</dbReference>
<dbReference type="GO" id="GO:0043536">
    <property type="term" value="P:positive regulation of blood vessel endothelial cell migration"/>
    <property type="evidence" value="ECO:0000266"/>
    <property type="project" value="RGD"/>
</dbReference>
<dbReference type="GO" id="GO:1905605">
    <property type="term" value="P:positive regulation of blood-brain barrier permeability"/>
    <property type="evidence" value="ECO:0000266"/>
    <property type="project" value="RGD"/>
</dbReference>
<dbReference type="GO" id="GO:0045785">
    <property type="term" value="P:positive regulation of cell adhesion"/>
    <property type="evidence" value="ECO:0000266"/>
    <property type="project" value="RGD"/>
</dbReference>
<dbReference type="GO" id="GO:0050820">
    <property type="term" value="P:positive regulation of coagulation"/>
    <property type="evidence" value="ECO:0000266"/>
    <property type="project" value="RGD"/>
</dbReference>
<dbReference type="GO" id="GO:0010595">
    <property type="term" value="P:positive regulation of endothelial cell migration"/>
    <property type="evidence" value="ECO:0000266"/>
    <property type="project" value="RGD"/>
</dbReference>
<dbReference type="GO" id="GO:0070374">
    <property type="term" value="P:positive regulation of ERK1 and ERK2 cascade"/>
    <property type="evidence" value="ECO:0000266"/>
    <property type="project" value="RGD"/>
</dbReference>
<dbReference type="GO" id="GO:0010628">
    <property type="term" value="P:positive regulation of gene expression"/>
    <property type="evidence" value="ECO:0000266"/>
    <property type="project" value="RGD"/>
</dbReference>
<dbReference type="GO" id="GO:0051897">
    <property type="term" value="P:positive regulation of phosphatidylinositol 3-kinase/protein kinase B signal transduction"/>
    <property type="evidence" value="ECO:0000266"/>
    <property type="project" value="RGD"/>
</dbReference>
<dbReference type="GO" id="GO:0031398">
    <property type="term" value="P:positive regulation of protein ubiquitination"/>
    <property type="evidence" value="ECO:0000266"/>
    <property type="project" value="RGD"/>
</dbReference>
<dbReference type="GO" id="GO:0002092">
    <property type="term" value="P:positive regulation of receptor internalization"/>
    <property type="evidence" value="ECO:0000266"/>
    <property type="project" value="RGD"/>
</dbReference>
<dbReference type="GO" id="GO:0034394">
    <property type="term" value="P:protein localization to cell surface"/>
    <property type="evidence" value="ECO:0000266"/>
    <property type="project" value="RGD"/>
</dbReference>
<dbReference type="GO" id="GO:0043122">
    <property type="term" value="P:regulation of canonical NF-kappaB signal transduction"/>
    <property type="evidence" value="ECO:0000266"/>
    <property type="project" value="RGD"/>
</dbReference>
<dbReference type="GO" id="GO:2000446">
    <property type="term" value="P:regulation of macrophage migration inhibitory factor signaling pathway"/>
    <property type="evidence" value="ECO:0000266"/>
    <property type="project" value="RGD"/>
</dbReference>
<dbReference type="GO" id="GO:0014842">
    <property type="term" value="P:regulation of skeletal muscle satellite cell proliferation"/>
    <property type="evidence" value="ECO:0000266"/>
    <property type="project" value="RGD"/>
</dbReference>
<dbReference type="GO" id="GO:0032680">
    <property type="term" value="P:regulation of tumor necrosis factor production"/>
    <property type="evidence" value="ECO:0000266"/>
    <property type="project" value="RGD"/>
</dbReference>
<dbReference type="GO" id="GO:0043627">
    <property type="term" value="P:response to estrogen"/>
    <property type="evidence" value="ECO:0000270"/>
    <property type="project" value="RGD"/>
</dbReference>
<dbReference type="GO" id="GO:0001666">
    <property type="term" value="P:response to hypoxia"/>
    <property type="evidence" value="ECO:0000270"/>
    <property type="project" value="RGD"/>
</dbReference>
<dbReference type="GO" id="GO:0033552">
    <property type="term" value="P:response to vitamin B3"/>
    <property type="evidence" value="ECO:0000270"/>
    <property type="project" value="RGD"/>
</dbReference>
<dbReference type="GO" id="GO:0002040">
    <property type="term" value="P:sprouting angiogenesis"/>
    <property type="evidence" value="ECO:0000266"/>
    <property type="project" value="RGD"/>
</dbReference>
<dbReference type="GO" id="GO:0048014">
    <property type="term" value="P:Tie signaling pathway"/>
    <property type="evidence" value="ECO:0000266"/>
    <property type="project" value="RGD"/>
</dbReference>
<dbReference type="CDD" id="cd00087">
    <property type="entry name" value="FReD"/>
    <property type="match status" value="1"/>
</dbReference>
<dbReference type="FunFam" id="3.90.215.10:FF:000005">
    <property type="entry name" value="angiopoietin-1 isoform X2"/>
    <property type="match status" value="1"/>
</dbReference>
<dbReference type="FunFam" id="4.10.530.10:FF:000001">
    <property type="entry name" value="angiopoietin-2 isoform X1"/>
    <property type="match status" value="1"/>
</dbReference>
<dbReference type="Gene3D" id="3.90.215.10">
    <property type="entry name" value="Gamma Fibrinogen, chain A, domain 1"/>
    <property type="match status" value="1"/>
</dbReference>
<dbReference type="Gene3D" id="4.10.530.10">
    <property type="entry name" value="Gamma-fibrinogen Carboxyl Terminal Fragment, domain 2"/>
    <property type="match status" value="1"/>
</dbReference>
<dbReference type="InterPro" id="IPR037579">
    <property type="entry name" value="FIB_ANG-like"/>
</dbReference>
<dbReference type="InterPro" id="IPR036056">
    <property type="entry name" value="Fibrinogen-like_C"/>
</dbReference>
<dbReference type="InterPro" id="IPR014716">
    <property type="entry name" value="Fibrinogen_a/b/g_C_1"/>
</dbReference>
<dbReference type="InterPro" id="IPR002181">
    <property type="entry name" value="Fibrinogen_a/b/g_C_dom"/>
</dbReference>
<dbReference type="InterPro" id="IPR020837">
    <property type="entry name" value="Fibrinogen_CS"/>
</dbReference>
<dbReference type="NCBIfam" id="NF040941">
    <property type="entry name" value="GGGWT_bact"/>
    <property type="match status" value="1"/>
</dbReference>
<dbReference type="PANTHER" id="PTHR47221">
    <property type="entry name" value="FIBRINOGEN ALPHA CHAIN"/>
    <property type="match status" value="1"/>
</dbReference>
<dbReference type="PANTHER" id="PTHR47221:SF6">
    <property type="entry name" value="FIBRINOGEN ALPHA CHAIN"/>
    <property type="match status" value="1"/>
</dbReference>
<dbReference type="Pfam" id="PF25443">
    <property type="entry name" value="ANG-1"/>
    <property type="match status" value="1"/>
</dbReference>
<dbReference type="Pfam" id="PF00147">
    <property type="entry name" value="Fibrinogen_C"/>
    <property type="match status" value="1"/>
</dbReference>
<dbReference type="SMART" id="SM00186">
    <property type="entry name" value="FBG"/>
    <property type="match status" value="1"/>
</dbReference>
<dbReference type="SUPFAM" id="SSF56496">
    <property type="entry name" value="Fibrinogen C-terminal domain-like"/>
    <property type="match status" value="1"/>
</dbReference>
<dbReference type="PROSITE" id="PS00514">
    <property type="entry name" value="FIBRINOGEN_C_1"/>
    <property type="match status" value="1"/>
</dbReference>
<dbReference type="PROSITE" id="PS51406">
    <property type="entry name" value="FIBRINOGEN_C_2"/>
    <property type="match status" value="1"/>
</dbReference>
<proteinExistence type="evidence at transcript level"/>
<protein>
    <recommendedName>
        <fullName>Angiopoietin-1</fullName>
        <shortName>ANG-1</shortName>
    </recommendedName>
</protein>
<feature type="signal peptide" evidence="3">
    <location>
        <begin position="1"/>
        <end position="19"/>
    </location>
</feature>
<feature type="chain" id="PRO_0000009112" description="Angiopoietin-1">
    <location>
        <begin position="20"/>
        <end position="497"/>
    </location>
</feature>
<feature type="domain" description="Fibrinogen C-terminal" evidence="4">
    <location>
        <begin position="276"/>
        <end position="496"/>
    </location>
</feature>
<feature type="coiled-coil region" evidence="3">
    <location>
        <begin position="81"/>
        <end position="119"/>
    </location>
</feature>
<feature type="coiled-coil region" evidence="3">
    <location>
        <begin position="153"/>
        <end position="261"/>
    </location>
</feature>
<feature type="glycosylation site" description="N-linked (GlcNAc...) asparagine" evidence="3">
    <location>
        <position position="92"/>
    </location>
</feature>
<feature type="glycosylation site" description="N-linked (GlcNAc...) asparagine" evidence="3">
    <location>
        <position position="122"/>
    </location>
</feature>
<feature type="glycosylation site" description="N-linked (GlcNAc...) asparagine" evidence="3">
    <location>
        <position position="154"/>
    </location>
</feature>
<feature type="glycosylation site" description="N-linked (GlcNAc...) asparagine" evidence="3">
    <location>
        <position position="243"/>
    </location>
</feature>
<feature type="glycosylation site" description="N-linked (GlcNAc...) asparagine" evidence="3">
    <location>
        <position position="294"/>
    </location>
</feature>
<feature type="disulfide bond" evidence="4">
    <location>
        <begin position="285"/>
        <end position="314"/>
    </location>
</feature>
<feature type="disulfide bond" evidence="4">
    <location>
        <begin position="438"/>
        <end position="451"/>
    </location>
</feature>
<feature type="sequence conflict" description="In Ref. 2; AAC78246." evidence="5" ref="2">
    <original>Q</original>
    <variation>E</variation>
    <location>
        <position position="98"/>
    </location>
</feature>
<feature type="sequence conflict" description="In Ref. 2; AAC78246." evidence="5" ref="2">
    <original>E</original>
    <variation>K</variation>
    <location>
        <position position="172"/>
    </location>
</feature>
<feature type="sequence conflict" description="In Ref. 2; AAC78246." evidence="5" ref="2">
    <original>E</original>
    <variation>K</variation>
    <location>
        <position position="189"/>
    </location>
</feature>
<evidence type="ECO:0000250" key="1">
    <source>
        <dbReference type="UniProtKB" id="O08538"/>
    </source>
</evidence>
<evidence type="ECO:0000250" key="2">
    <source>
        <dbReference type="UniProtKB" id="Q15389"/>
    </source>
</evidence>
<evidence type="ECO:0000255" key="3"/>
<evidence type="ECO:0000255" key="4">
    <source>
        <dbReference type="PROSITE-ProRule" id="PRU00739"/>
    </source>
</evidence>
<evidence type="ECO:0000305" key="5"/>
<name>ANGP1_RAT</name>
<reference key="1">
    <citation type="journal article" date="2002" name="Pharm. Res.">
        <title>Augmented expression of the tight junction protein occludin in brain endothelial cell line TR-bBB by rat angiopoietin-1 expressed in baculovirus-infected sf plus insect cells.</title>
        <authorList>
            <person name="Iizasa H."/>
            <person name="Bae S.H."/>
            <person name="Asashima T."/>
            <person name="Kitano T."/>
            <person name="Matsunaga N."/>
            <person name="Terasaki T."/>
            <person name="Kang Y.S."/>
            <person name="Nakashima E."/>
        </authorList>
    </citation>
    <scope>NUCLEOTIDE SEQUENCE [MRNA]</scope>
    <source>
        <strain>Wistar</strain>
        <tissue>Placenta</tissue>
    </source>
</reference>
<reference key="2">
    <citation type="journal article" date="1998" name="Circ. Res.">
        <title>Regulation of angiopoietin-2 mRNA levels in bovine microvascular endothelial cells by cytokines and hypoxia.</title>
        <authorList>
            <person name="Mandriota S.J."/>
            <person name="Pepper M.S."/>
        </authorList>
    </citation>
    <scope>NUCLEOTIDE SEQUENCE [MRNA] OF 91-200</scope>
    <source>
        <strain>Sprague-Dawley</strain>
        <tissue>Placenta</tissue>
    </source>
</reference>